<name>SOCS3_CHICK</name>
<comment type="function">
    <text evidence="2 3">SOCS family proteins form part of a classical negative feedback system that regulates cytokine signal transduction. SOCS3 is involved in negative regulation of cytokines that signal through the JAK/STAT pathway. Inhibits cytokine signal transduction by binding to tyrosine kinase receptors including IL6ST/gp130, LIF, erythropoietin, insulin, IL12, GCSF and leptin receptors. Binding to JAK2 inhibits its kinase activity and regulates IL6 signaling. Suppresses fetal liver erythropoiesis. Regulates onset and maintenance of allergic responses mediated by T-helper type 2 cells (By similarity). Probable substrate recognition component of a SCF-like ECS (Elongin BC-CUL2/5-SOCS-box protein) E3 ubiquitin-protein ligase complex which mediates the ubiquitination and subsequent proteasomal degradation of target proteins (By similarity).</text>
</comment>
<comment type="pathway">
    <text>Protein modification; protein ubiquitination.</text>
</comment>
<comment type="subunit">
    <text evidence="1">Interacts with multiple activated proteins of the tyrosine kinase signaling pathway including IGF1 receptor, insulin receptor and EPO receptor. Binding to JAK is mediated through the KIR and SH2 domains to a phosphorylated tyrosine residue within the JAK JH1 domain. Binds specific activated tyrosine residues of the leptin, EPO and gp130 receptors.</text>
</comment>
<comment type="domain">
    <text>The ESS and SH2 domains are required for JAK phosphotyrosine binding. Further interaction with the KIR domain is necessary for signal and kinase inhibition.</text>
</comment>
<comment type="domain">
    <text evidence="1">The SOCS box domain mediates the interaction with the Elongin BC complex, an adapter module in different E3 ubiquitin ligase complexes.</text>
</comment>
<comment type="PTM">
    <text evidence="1">Phosphorylated on tyrosine residues after stimulation by the cytokines, IL-2, EPO or IGF1.</text>
</comment>
<keyword id="KW-0341">Growth regulation</keyword>
<keyword id="KW-0597">Phosphoprotein</keyword>
<keyword id="KW-1185">Reference proteome</keyword>
<keyword id="KW-0727">SH2 domain</keyword>
<keyword id="KW-0734">Signal transduction inhibitor</keyword>
<keyword id="KW-0833">Ubl conjugation pathway</keyword>
<reference key="1">
    <citation type="submission" date="2001-09" db="EMBL/GenBank/DDBJ databases">
        <title>Chicken suppressors of cytokine signaling 3 (SOCS-3) has strictly conserved SH2 and SOCS box but lack interlink between domains.</title>
        <authorList>
            <person name="Wang X."/>
            <person name="Tang J."/>
            <person name="Cogburn L.A."/>
        </authorList>
    </citation>
    <scope>NUCLEOTIDE SEQUENCE [MRNA]</scope>
</reference>
<sequence>MVTHSKFPAAGMSRPLDTSLRLKTFSSKSEYQLVVNTVRKLQESGFYWSTVTGGEANVLLSAEPAGTFLIRDSSDQRHFFTLSVKTESGTKNLRIQCEGGSFSLQSDPRSSQPVPRFDCVLKLVHHYMPPTPCAGPKQPGGALHPKRTYYIYSGGEKIPLVLSRPLSSSVSTLQHLCRKTVNGHLDSYEKMTQLPAPIKEFLDQYDAPL</sequence>
<protein>
    <recommendedName>
        <fullName>Suppressor of cytokine signaling 3</fullName>
        <shortName>SOCS-3</shortName>
    </recommendedName>
</protein>
<evidence type="ECO:0000250" key="1"/>
<evidence type="ECO:0000250" key="2">
    <source>
        <dbReference type="UniProtKB" id="O14543"/>
    </source>
</evidence>
<evidence type="ECO:0000250" key="3">
    <source>
        <dbReference type="UniProtKB" id="O35718"/>
    </source>
</evidence>
<evidence type="ECO:0000255" key="4">
    <source>
        <dbReference type="PROSITE-ProRule" id="PRU00191"/>
    </source>
</evidence>
<evidence type="ECO:0000255" key="5">
    <source>
        <dbReference type="PROSITE-ProRule" id="PRU00194"/>
    </source>
</evidence>
<proteinExistence type="evidence at transcript level"/>
<organism>
    <name type="scientific">Gallus gallus</name>
    <name type="common">Chicken</name>
    <dbReference type="NCBI Taxonomy" id="9031"/>
    <lineage>
        <taxon>Eukaryota</taxon>
        <taxon>Metazoa</taxon>
        <taxon>Chordata</taxon>
        <taxon>Craniata</taxon>
        <taxon>Vertebrata</taxon>
        <taxon>Euteleostomi</taxon>
        <taxon>Archelosauria</taxon>
        <taxon>Archosauria</taxon>
        <taxon>Dinosauria</taxon>
        <taxon>Saurischia</taxon>
        <taxon>Theropoda</taxon>
        <taxon>Coelurosauria</taxon>
        <taxon>Aves</taxon>
        <taxon>Neognathae</taxon>
        <taxon>Galloanserae</taxon>
        <taxon>Galliformes</taxon>
        <taxon>Phasianidae</taxon>
        <taxon>Phasianinae</taxon>
        <taxon>Gallus</taxon>
    </lineage>
</organism>
<accession>Q90X67</accession>
<dbReference type="EMBL" id="AF424806">
    <property type="protein sequence ID" value="AAL23933.1"/>
    <property type="molecule type" value="mRNA"/>
</dbReference>
<dbReference type="RefSeq" id="NP_989931.1">
    <property type="nucleotide sequence ID" value="NM_204600.1"/>
</dbReference>
<dbReference type="SMR" id="Q90X67"/>
<dbReference type="FunCoup" id="Q90X67">
    <property type="interactions" value="301"/>
</dbReference>
<dbReference type="STRING" id="9031.ENSGALP00000042295"/>
<dbReference type="GlyGen" id="Q90X67">
    <property type="glycosylation" value="1 site"/>
</dbReference>
<dbReference type="PaxDb" id="9031-ENSGALP00000042295"/>
<dbReference type="GeneID" id="395299"/>
<dbReference type="KEGG" id="gga:395299"/>
<dbReference type="CTD" id="9021"/>
<dbReference type="VEuPathDB" id="HostDB:geneid_395299"/>
<dbReference type="eggNOG" id="KOG4566">
    <property type="taxonomic scope" value="Eukaryota"/>
</dbReference>
<dbReference type="InParanoid" id="Q90X67"/>
<dbReference type="OrthoDB" id="6426624at2759"/>
<dbReference type="PhylomeDB" id="Q90X67"/>
<dbReference type="UniPathway" id="UPA00143"/>
<dbReference type="PRO" id="PR:Q90X67"/>
<dbReference type="Proteomes" id="UP000000539">
    <property type="component" value="Unassembled WGS sequence"/>
</dbReference>
<dbReference type="GO" id="GO:0005126">
    <property type="term" value="F:cytokine receptor binding"/>
    <property type="evidence" value="ECO:0000318"/>
    <property type="project" value="GO_Central"/>
</dbReference>
<dbReference type="GO" id="GO:0019221">
    <property type="term" value="P:cytokine-mediated signaling pathway"/>
    <property type="evidence" value="ECO:0000318"/>
    <property type="project" value="GO_Central"/>
</dbReference>
<dbReference type="GO" id="GO:0035556">
    <property type="term" value="P:intracellular signal transduction"/>
    <property type="evidence" value="ECO:0007669"/>
    <property type="project" value="InterPro"/>
</dbReference>
<dbReference type="GO" id="GO:0046426">
    <property type="term" value="P:negative regulation of receptor signaling pathway via JAK-STAT"/>
    <property type="evidence" value="ECO:0000318"/>
    <property type="project" value="GO_Central"/>
</dbReference>
<dbReference type="GO" id="GO:0016567">
    <property type="term" value="P:protein ubiquitination"/>
    <property type="evidence" value="ECO:0007669"/>
    <property type="project" value="UniProtKB-UniPathway"/>
</dbReference>
<dbReference type="CDD" id="cd10384">
    <property type="entry name" value="SH2_SOCS3"/>
    <property type="match status" value="1"/>
</dbReference>
<dbReference type="CDD" id="cd03737">
    <property type="entry name" value="SOCS_SOCS3"/>
    <property type="match status" value="1"/>
</dbReference>
<dbReference type="FunFam" id="1.10.750.20:FF:000002">
    <property type="entry name" value="Suppressor of cytokine signaling 2"/>
    <property type="match status" value="1"/>
</dbReference>
<dbReference type="FunFam" id="3.30.505.10:FF:000066">
    <property type="entry name" value="suppressor of cytokine signaling 3"/>
    <property type="match status" value="1"/>
</dbReference>
<dbReference type="Gene3D" id="3.30.505.10">
    <property type="entry name" value="SH2 domain"/>
    <property type="match status" value="1"/>
</dbReference>
<dbReference type="Gene3D" id="1.10.750.20">
    <property type="entry name" value="SOCS box"/>
    <property type="match status" value="1"/>
</dbReference>
<dbReference type="InterPro" id="IPR000980">
    <property type="entry name" value="SH2"/>
</dbReference>
<dbReference type="InterPro" id="IPR036860">
    <property type="entry name" value="SH2_dom_sf"/>
</dbReference>
<dbReference type="InterPro" id="IPR035863">
    <property type="entry name" value="SOCS3_SH2"/>
</dbReference>
<dbReference type="InterPro" id="IPR028414">
    <property type="entry name" value="SOCS3_SOCS_box"/>
</dbReference>
<dbReference type="InterPro" id="IPR001496">
    <property type="entry name" value="SOCS_box"/>
</dbReference>
<dbReference type="InterPro" id="IPR036036">
    <property type="entry name" value="SOCS_box-like_dom_sf"/>
</dbReference>
<dbReference type="PANTHER" id="PTHR10155">
    <property type="entry name" value="PHOSPHATIDYLINOSITOL 3-KINASE REGULATORY SUBUNIT"/>
    <property type="match status" value="1"/>
</dbReference>
<dbReference type="PANTHER" id="PTHR10155:SF11">
    <property type="entry name" value="SUPPRESSOR OF CYTOKINE SIGNALING 3"/>
    <property type="match status" value="1"/>
</dbReference>
<dbReference type="Pfam" id="PF00017">
    <property type="entry name" value="SH2"/>
    <property type="match status" value="1"/>
</dbReference>
<dbReference type="SMART" id="SM00252">
    <property type="entry name" value="SH2"/>
    <property type="match status" value="1"/>
</dbReference>
<dbReference type="SMART" id="SM00253">
    <property type="entry name" value="SOCS"/>
    <property type="match status" value="1"/>
</dbReference>
<dbReference type="SMART" id="SM00969">
    <property type="entry name" value="SOCS_box"/>
    <property type="match status" value="1"/>
</dbReference>
<dbReference type="SUPFAM" id="SSF55550">
    <property type="entry name" value="SH2 domain"/>
    <property type="match status" value="1"/>
</dbReference>
<dbReference type="SUPFAM" id="SSF158235">
    <property type="entry name" value="SOCS box-like"/>
    <property type="match status" value="1"/>
</dbReference>
<dbReference type="PROSITE" id="PS50001">
    <property type="entry name" value="SH2"/>
    <property type="match status" value="1"/>
</dbReference>
<dbReference type="PROSITE" id="PS50225">
    <property type="entry name" value="SOCS"/>
    <property type="match status" value="1"/>
</dbReference>
<gene>
    <name type="primary">SOCS3</name>
</gene>
<feature type="chain" id="PRO_0000181246" description="Suppressor of cytokine signaling 3">
    <location>
        <begin position="1"/>
        <end position="209"/>
    </location>
</feature>
<feature type="domain" description="SH2" evidence="4">
    <location>
        <begin position="46"/>
        <end position="142"/>
    </location>
</feature>
<feature type="domain" description="SOCS box" evidence="5">
    <location>
        <begin position="161"/>
        <end position="208"/>
    </location>
</feature>
<feature type="region of interest" description="Kinase inhibitory region (KIR)">
    <location>
        <begin position="22"/>
        <end position="33"/>
    </location>
</feature>
<feature type="region of interest" description="Extended SH2 subdomain (ESS)">
    <location>
        <begin position="34"/>
        <end position="45"/>
    </location>
</feature>